<feature type="chain" id="PRO_0000418316" description="Protein UL42">
    <location>
        <begin position="1"/>
        <end position="125"/>
    </location>
</feature>
<feature type="transmembrane region" description="Helical" evidence="3">
    <location>
        <begin position="89"/>
        <end position="109"/>
    </location>
</feature>
<feature type="region of interest" description="Disordered" evidence="4">
    <location>
        <begin position="1"/>
        <end position="47"/>
    </location>
</feature>
<feature type="short sequence motif" description="PPXY motif" evidence="1">
    <location>
        <begin position="16"/>
        <end position="19"/>
    </location>
</feature>
<feature type="short sequence motif" description="PPXY motif" evidence="1">
    <location>
        <begin position="42"/>
        <end position="45"/>
    </location>
</feature>
<feature type="compositionally biased region" description="Pro residues" evidence="4">
    <location>
        <begin position="32"/>
        <end position="47"/>
    </location>
</feature>
<evidence type="ECO:0000250" key="1">
    <source>
        <dbReference type="UniProtKB" id="D5LX53"/>
    </source>
</evidence>
<evidence type="ECO:0000250" key="2">
    <source>
        <dbReference type="UniProtKB" id="P16815"/>
    </source>
</evidence>
<evidence type="ECO:0000255" key="3"/>
<evidence type="ECO:0000256" key="4">
    <source>
        <dbReference type="SAM" id="MobiDB-lite"/>
    </source>
</evidence>
<evidence type="ECO:0000269" key="5">
    <source>
    </source>
</evidence>
<evidence type="ECO:0000305" key="6"/>
<sequence>MEPTPMLRDRDHDDAPPTYEQAMGLCPTTVSTPPPPPPDCSPPPYRPPYCLVSSPSPRHTFDMDMMEMPATMHPTTGAYFDNGWKWTFALLVVAILGIIFLAVVFTVVINRDSANITTGTQASSG</sequence>
<accession>F5HHZ3</accession>
<comment type="function">
    <text evidence="1 2">Plays a role in the inhibition of host innate immune response to promote latent infection. Mechanistically, suppresses viral DNA-triggered signaling by impairing DNA binding and oligomerization of CGAS. Also impairs the translocation of host STING1 from the endoplasmic reticulum to perinuclear punctate structures which is an essential step for its activation (By similarity). Regulates the function of host NEDD4 family ubiquitin E3 ligases through its PPxY motif and thereby prevents the excessive ubiquitination of gB and its degradation by inhibiting these E3 ligases (By similarity).</text>
</comment>
<comment type="subunit">
    <text evidence="1 2">Interacts with host ITCH; this interaction induces the ubiquitination and subsequent degradation of ITCH (By similarity). Interacts with host STING1. Interacts with CGAS (By similarity).</text>
</comment>
<comment type="subcellular location">
    <subcellularLocation>
        <location evidence="6">Host membrane</location>
        <topology evidence="6">Single-pass membrane protein</topology>
    </subcellularLocation>
    <subcellularLocation>
        <location evidence="5">Host cytoplasm</location>
    </subcellularLocation>
    <text evidence="5">Accumulates in the perinuclear region of the host cytoplasm, with some dispersal into the cytoplasm in a fine-speckled pattern.</text>
</comment>
<comment type="domain">
    <text evidence="1">Late-budding domains (L domains) are short sequence motifs essential for viral particle budding. They recruit proteins of the host ESCRT machinery (Endosomal Sorting Complex Required for Transport) or ESCRT-associated proteins. Contains one L domain: a PPXY motif which is involved in the interaction with ITCH, a member of the NEDD4 family.</text>
</comment>
<comment type="similarity">
    <text evidence="6">Belongs to the Cytomegalovirus UL42 protein family.</text>
</comment>
<dbReference type="EMBL" id="AY446894">
    <property type="protein sequence ID" value="AAR31606.1"/>
    <property type="molecule type" value="Genomic_DNA"/>
</dbReference>
<dbReference type="RefSeq" id="YP_081500.1">
    <property type="nucleotide sequence ID" value="NC_006273.2"/>
</dbReference>
<dbReference type="SMR" id="F5HHZ3"/>
<dbReference type="BioGRID" id="1677993">
    <property type="interactions" value="1"/>
</dbReference>
<dbReference type="DNASU" id="3077440"/>
<dbReference type="GeneID" id="3077440"/>
<dbReference type="KEGG" id="vg:3077440"/>
<dbReference type="Proteomes" id="UP000000938">
    <property type="component" value="Segment"/>
</dbReference>
<dbReference type="GO" id="GO:0030430">
    <property type="term" value="C:host cell cytoplasm"/>
    <property type="evidence" value="ECO:0007669"/>
    <property type="project" value="UniProtKB-SubCell"/>
</dbReference>
<dbReference type="GO" id="GO:0033644">
    <property type="term" value="C:host cell membrane"/>
    <property type="evidence" value="ECO:0007669"/>
    <property type="project" value="UniProtKB-SubCell"/>
</dbReference>
<dbReference type="GO" id="GO:0016020">
    <property type="term" value="C:membrane"/>
    <property type="evidence" value="ECO:0007669"/>
    <property type="project" value="UniProtKB-KW"/>
</dbReference>
<dbReference type="GO" id="GO:0052170">
    <property type="term" value="P:symbiont-mediated suppression of host innate immune response"/>
    <property type="evidence" value="ECO:0007669"/>
    <property type="project" value="UniProtKB-KW"/>
</dbReference>
<dbReference type="InterPro" id="IPR035110">
    <property type="entry name" value="UL42"/>
</dbReference>
<dbReference type="Pfam" id="PF17638">
    <property type="entry name" value="UL42"/>
    <property type="match status" value="1"/>
</dbReference>
<name>UL42_HCMVM</name>
<keyword id="KW-1035">Host cytoplasm</keyword>
<keyword id="KW-1043">Host membrane</keyword>
<keyword id="KW-0945">Host-virus interaction</keyword>
<keyword id="KW-1090">Inhibition of host innate immune response by virus</keyword>
<keyword id="KW-0472">Membrane</keyword>
<keyword id="KW-1185">Reference proteome</keyword>
<keyword id="KW-0812">Transmembrane</keyword>
<keyword id="KW-1133">Transmembrane helix</keyword>
<keyword id="KW-0899">Viral immunoevasion</keyword>
<organism>
    <name type="scientific">Human cytomegalovirus (strain Merlin)</name>
    <name type="common">HHV-5</name>
    <name type="synonym">Human herpesvirus 5</name>
    <dbReference type="NCBI Taxonomy" id="295027"/>
    <lineage>
        <taxon>Viruses</taxon>
        <taxon>Duplodnaviria</taxon>
        <taxon>Heunggongvirae</taxon>
        <taxon>Peploviricota</taxon>
        <taxon>Herviviricetes</taxon>
        <taxon>Herpesvirales</taxon>
        <taxon>Orthoherpesviridae</taxon>
        <taxon>Betaherpesvirinae</taxon>
        <taxon>Cytomegalovirus</taxon>
        <taxon>Cytomegalovirus humanbeta5</taxon>
        <taxon>Human cytomegalovirus</taxon>
    </lineage>
</organism>
<protein>
    <recommendedName>
        <fullName>Protein UL42</fullName>
    </recommendedName>
</protein>
<gene>
    <name type="primary">UL42</name>
</gene>
<reference key="1">
    <citation type="journal article" date="2004" name="J. Gen. Virol.">
        <title>Genetic content of wild-type human cytomegalovirus.</title>
        <authorList>
            <person name="Dolan A."/>
            <person name="Cunningham C."/>
            <person name="Hector R.D."/>
            <person name="Hassan-Walker A.F."/>
            <person name="Lee L."/>
            <person name="Addison C."/>
            <person name="Dargan D.J."/>
            <person name="McGeoch D.J."/>
            <person name="Gatherer D."/>
            <person name="Emery V.C."/>
            <person name="Griffiths P.D."/>
            <person name="Sinzger C."/>
            <person name="McSharry B.P."/>
            <person name="Wilkinson G.W.G."/>
            <person name="Davison A.J."/>
        </authorList>
    </citation>
    <scope>NUCLEOTIDE SEQUENCE [LARGE SCALE GENOMIC DNA]</scope>
</reference>
<reference key="2">
    <citation type="journal article" date="2016" name="J. Gen. Virol.">
        <title>Degradation of host ubiquitin E3 ligase Itch by human cytomegalovirus UL42.</title>
        <authorList>
            <person name="Koshizuka T."/>
            <person name="Tanaka K."/>
            <person name="Suzutani T."/>
        </authorList>
    </citation>
    <scope>FUNCTION</scope>
    <scope>INTERACTION WITH HOST ITCH</scope>
    <scope>SUBCELLULAR LOCATION</scope>
</reference>
<proteinExistence type="evidence at protein level"/>
<organismHost>
    <name type="scientific">Homo sapiens</name>
    <name type="common">Human</name>
    <dbReference type="NCBI Taxonomy" id="9606"/>
</organismHost>